<keyword id="KW-0002">3D-structure</keyword>
<keyword id="KW-0011">Acute phase</keyword>
<keyword id="KW-0025">Alternative splicing</keyword>
<keyword id="KW-0903">Direct protein sequencing</keyword>
<keyword id="KW-0325">Glycoprotein</keyword>
<keyword id="KW-0646">Protease inhibitor</keyword>
<keyword id="KW-1267">Proteomics identification</keyword>
<keyword id="KW-1185">Reference proteome</keyword>
<keyword id="KW-0964">Secreted</keyword>
<keyword id="KW-0722">Serine protease inhibitor</keyword>
<keyword id="KW-0732">Signal</keyword>
<comment type="function">
    <text evidence="12">Although its physiological function is unclear, it can inhibit neutrophil cathepsin G and mast cell chymase, both of which can convert angiotensin-1 to the active angiotensin-2.</text>
</comment>
<comment type="subunit">
    <text evidence="4">Interacts with DNAJC1.</text>
</comment>
<comment type="interaction">
    <interactant intactId="EBI-296557">
        <id>P01011</id>
    </interactant>
    <interactant intactId="EBI-77613">
        <id>P05067</id>
        <label>APP</label>
    </interactant>
    <organismsDiffer>false</organismsDiffer>
    <experiments>3</experiments>
</comment>
<comment type="interaction">
    <interactant intactId="EBI-296557">
        <id>P01011</id>
    </interactant>
    <interactant intactId="EBI-718729">
        <id>P55212</id>
        <label>CASP6</label>
    </interactant>
    <organismsDiffer>false</organismsDiffer>
    <experiments>3</experiments>
</comment>
<comment type="interaction">
    <interactant intactId="EBI-296557">
        <id>P01011</id>
    </interactant>
    <interactant intactId="EBI-296550">
        <id>Q96KC8</id>
        <label>DNAJC1</label>
    </interactant>
    <organismsDiffer>false</organismsDiffer>
    <experiments>3</experiments>
</comment>
<comment type="interaction">
    <interactant intactId="EBI-296557">
        <id>P01011</id>
    </interactant>
    <interactant intactId="EBI-21591415">
        <id>P13473-2</id>
        <label>LAMP2</label>
    </interactant>
    <organismsDiffer>false</organismsDiffer>
    <experiments>3</experiments>
</comment>
<comment type="interaction">
    <interactant intactId="EBI-296557">
        <id>P01011</id>
    </interactant>
    <interactant intactId="EBI-2623095">
        <id>Q9Y371</id>
        <label>SH3GLB1</label>
    </interactant>
    <organismsDiffer>false</organismsDiffer>
    <experiments>3</experiments>
</comment>
<comment type="interaction">
    <interactant intactId="EBI-296557">
        <id>P01011</id>
    </interactant>
    <interactant intactId="EBI-357085">
        <id>Q9UNE7</id>
        <label>STUB1</label>
    </interactant>
    <organismsDiffer>false</organismsDiffer>
    <experiments>3</experiments>
</comment>
<comment type="interaction">
    <interactant intactId="EBI-296557">
        <id>P01011</id>
    </interactant>
    <interactant intactId="EBI-11141397">
        <id>Q9UBQ0-2</id>
        <label>VPS29</label>
    </interactant>
    <organismsDiffer>false</organismsDiffer>
    <experiments>3</experiments>
</comment>
<comment type="interaction">
    <interactant intactId="EBI-296557">
        <id>P01011</id>
    </interactant>
    <interactant intactId="EBI-2527283">
        <id>Q96AX1</id>
        <label>VPS33A</label>
    </interactant>
    <organismsDiffer>false</organismsDiffer>
    <experiments>3</experiments>
</comment>
<comment type="subcellular location">
    <subcellularLocation>
        <location>Secreted</location>
    </subcellularLocation>
</comment>
<comment type="alternative products">
    <event type="alternative splicing"/>
    <isoform>
        <id>P01011-1</id>
        <name>1</name>
        <sequence type="displayed"/>
    </isoform>
    <isoform>
        <id>P01011-2</id>
        <name>2</name>
        <sequence type="described" ref="VSP_014227 VSP_014228"/>
    </isoform>
    <isoform>
        <id>P01011-3</id>
        <name>3</name>
        <sequence type="described" ref="VSP_014225 VSP_014226"/>
    </isoform>
</comment>
<comment type="tissue specificity">
    <text evidence="14 16">Plasma. Synthesized in the liver. Like the related alpha-1-antitrypsin, its concentration increases in the acute phase of inflammation or infection. Found in the amyloid plaques from the hippocampus of Alzheimer disease brains.</text>
</comment>
<comment type="domain">
    <text>The reactive center loop (RCL) extends out from the body of the protein and directs binding to the target protease. The protease cleaves the serpin at the reactive site within the RCL, establishing a covalent linkage between the carboxyl group of the serpin reactive site and the serine hydroxyl of the protease. The resulting inactive serpin-protease complex is highly stable.</text>
</comment>
<comment type="PTM">
    <text evidence="2 6 9 10 11">N- and O-glycosylated.</text>
</comment>
<comment type="miscellaneous">
    <text>Alpha-1-antichymotrypsin can bind DNA.</text>
</comment>
<comment type="similarity">
    <text evidence="21">Belongs to the serpin family.</text>
</comment>
<comment type="caution">
    <text evidence="21">It is uncertain whether Met-1 or Met-4 is the initiator.</text>
</comment>
<comment type="sequence caution" evidence="21">
    <conflict type="frameshift">
        <sequence resource="EMBL-CDS" id="AAA51543"/>
    </conflict>
</comment>
<comment type="sequence caution" evidence="21">
    <conflict type="erroneous initiation">
        <sequence resource="EMBL-CDS" id="AAT08029"/>
    </conflict>
    <text>Extended N-terminus.</text>
</comment>
<comment type="sequence caution" evidence="21">
    <conflict type="frameshift">
        <sequence resource="EMBL-CDS" id="AAT08029"/>
    </conflict>
</comment>
<comment type="sequence caution" evidence="21">
    <conflict type="erroneous initiation">
        <sequence resource="EMBL-CDS" id="BAD92297"/>
    </conflict>
    <text>Extended N-terminus.</text>
</comment>
<comment type="sequence caution" evidence="21">
    <conflict type="erroneous initiation">
        <sequence resource="EMBL-CDS" id="CAA48671"/>
    </conflict>
    <text>Extended N-terminus.</text>
</comment>
<comment type="online information" name="Wikipedia">
    <link uri="https://en.wikipedia.org/wiki/Alpha_1-antichymotrypsin"/>
    <text>Alpha-1 antichymotrypsin entry</text>
</comment>
<reference key="1">
    <citation type="journal article" date="1983" name="Biochemistry">
        <title>Sequence homology between human alpha 1-antichymotrypsin, alpha 1-antitrypsin, and antithrombin III.</title>
        <authorList>
            <person name="Chandra T."/>
            <person name="Stackhouse R."/>
            <person name="Kidd V.J."/>
            <person name="Robson K.J.H."/>
            <person name="Woo S.L.C."/>
        </authorList>
    </citation>
    <scope>NUCLEOTIDE SEQUENCE [MRNA] (ISOFORM 1)</scope>
    <source>
        <tissue>Liver</tissue>
    </source>
</reference>
<reference key="2">
    <citation type="journal article" date="1993" name="Genomics">
        <title>A leucine-to-proline substitution causes a defective alpha 1-antichymotrypsin allele associated with familial obstructive lung disease.</title>
        <authorList>
            <person name="Poller W."/>
            <person name="Faber J.-P."/>
            <person name="Weidinger S."/>
            <person name="Tief K."/>
            <person name="Scholz S."/>
            <person name="Fischer M."/>
            <person name="Olek K."/>
            <person name="Kirchgesser M."/>
            <person name="Heidtmann H.-H."/>
        </authorList>
    </citation>
    <scope>NUCLEOTIDE SEQUENCE [GENOMIC DNA]</scope>
    <scope>VARIANTS PRO-78 AND ALA-252</scope>
</reference>
<reference key="3">
    <citation type="submission" date="2003-12" db="EMBL/GenBank/DDBJ databases">
        <title>Identification of a human cell growth inhibiting gene.</title>
        <authorList>
            <person name="Kim J.W."/>
        </authorList>
    </citation>
    <scope>NUCLEOTIDE SEQUENCE [LARGE SCALE MRNA] (ISOFORM 1)</scope>
    <scope>VARIANT THR-9</scope>
</reference>
<reference key="4">
    <citation type="journal article" date="2004" name="Nat. Genet.">
        <title>Complete sequencing and characterization of 21,243 full-length human cDNAs.</title>
        <authorList>
            <person name="Ota T."/>
            <person name="Suzuki Y."/>
            <person name="Nishikawa T."/>
            <person name="Otsuki T."/>
            <person name="Sugiyama T."/>
            <person name="Irie R."/>
            <person name="Wakamatsu A."/>
            <person name="Hayashi K."/>
            <person name="Sato H."/>
            <person name="Nagai K."/>
            <person name="Kimura K."/>
            <person name="Makita H."/>
            <person name="Sekine M."/>
            <person name="Obayashi M."/>
            <person name="Nishi T."/>
            <person name="Shibahara T."/>
            <person name="Tanaka T."/>
            <person name="Ishii S."/>
            <person name="Yamamoto J."/>
            <person name="Saito K."/>
            <person name="Kawai Y."/>
            <person name="Isono Y."/>
            <person name="Nakamura Y."/>
            <person name="Nagahari K."/>
            <person name="Murakami K."/>
            <person name="Yasuda T."/>
            <person name="Iwayanagi T."/>
            <person name="Wagatsuma M."/>
            <person name="Shiratori A."/>
            <person name="Sudo H."/>
            <person name="Hosoiri T."/>
            <person name="Kaku Y."/>
            <person name="Kodaira H."/>
            <person name="Kondo H."/>
            <person name="Sugawara M."/>
            <person name="Takahashi M."/>
            <person name="Kanda K."/>
            <person name="Yokoi T."/>
            <person name="Furuya T."/>
            <person name="Kikkawa E."/>
            <person name="Omura Y."/>
            <person name="Abe K."/>
            <person name="Kamihara K."/>
            <person name="Katsuta N."/>
            <person name="Sato K."/>
            <person name="Tanikawa M."/>
            <person name="Yamazaki M."/>
            <person name="Ninomiya K."/>
            <person name="Ishibashi T."/>
            <person name="Yamashita H."/>
            <person name="Murakawa K."/>
            <person name="Fujimori K."/>
            <person name="Tanai H."/>
            <person name="Kimata M."/>
            <person name="Watanabe M."/>
            <person name="Hiraoka S."/>
            <person name="Chiba Y."/>
            <person name="Ishida S."/>
            <person name="Ono Y."/>
            <person name="Takiguchi S."/>
            <person name="Watanabe S."/>
            <person name="Yosida M."/>
            <person name="Hotuta T."/>
            <person name="Kusano J."/>
            <person name="Kanehori K."/>
            <person name="Takahashi-Fujii A."/>
            <person name="Hara H."/>
            <person name="Tanase T.-O."/>
            <person name="Nomura Y."/>
            <person name="Togiya S."/>
            <person name="Komai F."/>
            <person name="Hara R."/>
            <person name="Takeuchi K."/>
            <person name="Arita M."/>
            <person name="Imose N."/>
            <person name="Musashino K."/>
            <person name="Yuuki H."/>
            <person name="Oshima A."/>
            <person name="Sasaki N."/>
            <person name="Aotsuka S."/>
            <person name="Yoshikawa Y."/>
            <person name="Matsunawa H."/>
            <person name="Ichihara T."/>
            <person name="Shiohata N."/>
            <person name="Sano S."/>
            <person name="Moriya S."/>
            <person name="Momiyama H."/>
            <person name="Satoh N."/>
            <person name="Takami S."/>
            <person name="Terashima Y."/>
            <person name="Suzuki O."/>
            <person name="Nakagawa S."/>
            <person name="Senoh A."/>
            <person name="Mizoguchi H."/>
            <person name="Goto Y."/>
            <person name="Shimizu F."/>
            <person name="Wakebe H."/>
            <person name="Hishigaki H."/>
            <person name="Watanabe T."/>
            <person name="Sugiyama A."/>
            <person name="Takemoto M."/>
            <person name="Kawakami B."/>
            <person name="Yamazaki M."/>
            <person name="Watanabe K."/>
            <person name="Kumagai A."/>
            <person name="Itakura S."/>
            <person name="Fukuzumi Y."/>
            <person name="Fujimori Y."/>
            <person name="Komiyama M."/>
            <person name="Tashiro H."/>
            <person name="Tanigami A."/>
            <person name="Fujiwara T."/>
            <person name="Ono T."/>
            <person name="Yamada K."/>
            <person name="Fujii Y."/>
            <person name="Ozaki K."/>
            <person name="Hirao M."/>
            <person name="Ohmori Y."/>
            <person name="Kawabata A."/>
            <person name="Hikiji T."/>
            <person name="Kobatake N."/>
            <person name="Inagaki H."/>
            <person name="Ikema Y."/>
            <person name="Okamoto S."/>
            <person name="Okitani R."/>
            <person name="Kawakami T."/>
            <person name="Noguchi S."/>
            <person name="Itoh T."/>
            <person name="Shigeta K."/>
            <person name="Senba T."/>
            <person name="Matsumura K."/>
            <person name="Nakajima Y."/>
            <person name="Mizuno T."/>
            <person name="Morinaga M."/>
            <person name="Sasaki M."/>
            <person name="Togashi T."/>
            <person name="Oyama M."/>
            <person name="Hata H."/>
            <person name="Watanabe M."/>
            <person name="Komatsu T."/>
            <person name="Mizushima-Sugano J."/>
            <person name="Satoh T."/>
            <person name="Shirai Y."/>
            <person name="Takahashi Y."/>
            <person name="Nakagawa K."/>
            <person name="Okumura K."/>
            <person name="Nagase T."/>
            <person name="Nomura N."/>
            <person name="Kikuchi H."/>
            <person name="Masuho Y."/>
            <person name="Yamashita R."/>
            <person name="Nakai K."/>
            <person name="Yada T."/>
            <person name="Nakamura Y."/>
            <person name="Ohara O."/>
            <person name="Isogai T."/>
            <person name="Sugano S."/>
        </authorList>
    </citation>
    <scope>NUCLEOTIDE SEQUENCE [LARGE SCALE MRNA] (ISOFORM 1)</scope>
    <scope>VARIANT THR-9</scope>
    <source>
        <tissue>Urinary bladder</tissue>
    </source>
</reference>
<reference key="5">
    <citation type="submission" date="2005-03" db="EMBL/GenBank/DDBJ databases">
        <authorList>
            <person name="Totoki Y."/>
            <person name="Toyoda A."/>
            <person name="Takeda T."/>
            <person name="Sakaki Y."/>
            <person name="Tanaka A."/>
            <person name="Yokoyama S."/>
            <person name="Ohara O."/>
            <person name="Nagase T."/>
            <person name="Kikuno R.F."/>
        </authorList>
    </citation>
    <scope>NUCLEOTIDE SEQUENCE [LARGE SCALE MRNA] (ISOFORM 2)</scope>
    <scope>VARIANT THR-9</scope>
    <source>
        <tissue>Brain</tissue>
    </source>
</reference>
<reference key="6">
    <citation type="journal article" date="2004" name="Genome Res.">
        <title>The status, quality, and expansion of the NIH full-length cDNA project: the Mammalian Gene Collection (MGC).</title>
        <authorList>
            <consortium name="The MGC Project Team"/>
        </authorList>
    </citation>
    <scope>NUCLEOTIDE SEQUENCE [LARGE SCALE MRNA] (ISOFORMS 1 AND 3)</scope>
    <scope>VARIANTS THR-9 AND ARG-267</scope>
    <source>
        <tissue>Brain</tissue>
        <tissue>Liver</tissue>
        <tissue>Skin</tissue>
    </source>
</reference>
<reference key="7">
    <citation type="journal article" date="1988" name="Cell">
        <title>Immunochemical identification of the serine protease inhibitor alpha 1-antichymotrypsin in the brain amyloid deposits of Alzheimer's disease.</title>
        <authorList>
            <person name="Abraham C.R."/>
            <person name="Selkoe D.J."/>
            <person name="Potter H."/>
        </authorList>
    </citation>
    <scope>NUCLEOTIDE SEQUENCE [MRNA] OF 1-46</scope>
    <scope>TISSUE SPECIFICITY</scope>
    <source>
        <tissue>Liver</tissue>
    </source>
</reference>
<reference key="8">
    <citation type="journal article" date="1999" name="J. Biol. Chem.">
        <title>Molecular studies define the primary structure of alpha1-antichymotrypsin (ACT) protease inhibitor in Alzheimer's disease brains. Comparison of act in hippocampus and liver.</title>
        <authorList>
            <person name="Hwang S.-R."/>
            <person name="Steineckert B."/>
            <person name="Kohn A."/>
            <person name="Palkovits M."/>
            <person name="Hook V.Y.H."/>
        </authorList>
    </citation>
    <scope>NUCLEOTIDE SEQUENCE [MRNA] OF 17-423 (ISOFORM 1)</scope>
    <scope>TISSUE SPECIFICITY</scope>
    <source>
        <tissue>Hippocampus</tissue>
    </source>
</reference>
<reference key="9">
    <citation type="submission" date="1989-10" db="EMBL/GenBank/DDBJ databases">
        <authorList>
            <person name="Rubin H."/>
        </authorList>
    </citation>
    <scope>NUCLEOTIDE SEQUENCE [MRNA] OF 22-86 AND 130-423 (ISOFORM 1)</scope>
</reference>
<reference key="10">
    <citation type="journal article" date="1989" name="Biochim. Biophys. Acta">
        <title>The microheterogeneity of desialylated alpha 1-antichymotrypsin: the occurrence of two amino-terminal isoforms, one lacking a His-Pro dipeptide.</title>
        <authorList>
            <person name="Lindmark B."/>
            <person name="Hilja H."/>
            <person name="Alan R."/>
            <person name="Eriksson S."/>
        </authorList>
    </citation>
    <scope>PROTEIN SEQUENCE OF 24-34</scope>
</reference>
<reference key="11">
    <citation type="journal article" date="1994" name="Biol. Chem. Hoppe-Seyler">
        <title>Interactions of alpha-1-antichymotrypsin, alpha-1-proteinase inhibitor, and alpha-2-macroglobulin with the fungal enzyme, seaprose.</title>
        <authorList>
            <person name="Korzus E."/>
            <person name="Luisetti M."/>
            <person name="Travis J."/>
        </authorList>
    </citation>
    <scope>NUCLEOTIDE SEQUENCE [MRNA] OF 36-45</scope>
</reference>
<reference key="12">
    <citation type="journal article" date="1983" name="Biochem. Biophys. Res. Commun.">
        <title>Structural alterations in alpha 1-antichymotrypsin from normal and acute phase human plasma.</title>
        <authorList>
            <person name="Morii M."/>
            <person name="Travis J."/>
        </authorList>
    </citation>
    <scope>PROTEIN SEQUENCE OF 41-60</scope>
</reference>
<reference key="13">
    <citation type="journal article" date="1996" name="Int. J. Cancer">
        <title>Characterisation of the tumour-associated carbohydrate epitope recognised by monoclonal antibody 4D3.</title>
        <authorList>
            <person name="Pinczower G.D."/>
            <person name="Williams R.P.W."/>
            <person name="Gianello R.D."/>
            <person name="Robinson H.C."/>
            <person name="Preston B.N."/>
            <person name="Linnane A.W."/>
        </authorList>
    </citation>
    <scope>PROTEIN SEQUENCE OF 48-68 (ISOFORMS 1/2)</scope>
</reference>
<reference key="14">
    <citation type="journal article" date="1990" name="J. Biol. Chem.">
        <title>Cloning, expression, purification, and biological activity of recombinant native and variant human alpha 1-antichymotrypsins.</title>
        <authorList>
            <person name="Rubin H."/>
            <person name="Wang Z."/>
            <person name="Nickbarg E.B."/>
            <person name="McLarney S."/>
            <person name="Naidoo N."/>
            <person name="Schoenberger O.L."/>
            <person name="Johnson J.L."/>
            <person name="Cooperman B.S."/>
        </authorList>
    </citation>
    <scope>NUCLEOTIDE SEQUENCE [MRNA] OF 87-129 (ISOFORMS 1/2)</scope>
    <scope>FUNCTION</scope>
    <source>
        <tissue>Liver</tissue>
    </source>
</reference>
<reference key="15">
    <citation type="journal article" date="1984" name="Nature">
        <title>Plasma protease inhibitors in mouse and man: divergence within the reactive centre regions.</title>
        <authorList>
            <person name="Hill R.E."/>
            <person name="Shaw P.H."/>
            <person name="Boyd P.A."/>
            <person name="Baumann H."/>
            <person name="Hastie N.D."/>
        </authorList>
    </citation>
    <scope>NUCLEOTIDE SEQUENCE [GENOMIC DNA] OF 205-423</scope>
</reference>
<reference key="16">
    <citation type="journal article" date="1983" name="J. Biol. Chem.">
        <title>Amino acid sequence at the reactive site of human alpha 1-antichymotrypsin.</title>
        <authorList>
            <person name="Morii M."/>
            <person name="Travis J."/>
        </authorList>
    </citation>
    <scope>REACTIVE SITE</scope>
</reference>
<reference key="17">
    <citation type="journal article" date="2003" name="Nat. Biotechnol.">
        <title>Identification and quantification of N-linked glycoproteins using hydrazide chemistry, stable isotope labeling and mass spectrometry.</title>
        <authorList>
            <person name="Zhang H."/>
            <person name="Li X.-J."/>
            <person name="Martin D.B."/>
            <person name="Aebersold R."/>
        </authorList>
    </citation>
    <scope>GLYCOSYLATION AT ASN-93 AND ASN-106</scope>
</reference>
<reference key="18">
    <citation type="journal article" date="2004" name="J. Biol. Chem.">
        <title>The SANT2 domain of the murine tumor cell DnaJ-like protein 1 human homologue interacts with alpha1-antichymotrypsin and kinetically interferes with its serpin inhibitory activity.</title>
        <authorList>
            <person name="Kroczynska B."/>
            <person name="Evangelista C.M."/>
            <person name="Samant S.S."/>
            <person name="Elguindi E.C."/>
            <person name="Blond S.Y."/>
        </authorList>
    </citation>
    <scope>INTERACTION WITH DNAJC1</scope>
</reference>
<reference key="19">
    <citation type="journal article" date="2004" name="J. Mol. Evol.">
        <title>Expression patterns of murine antichymotrypsin-like genes reflect evolutionary divergence at the Serpina3 locus.</title>
        <authorList>
            <person name="Horvath A.J."/>
            <person name="Forsyth S.L."/>
            <person name="Coughlin P.B."/>
        </authorList>
    </citation>
    <scope>REGION RCL</scope>
</reference>
<reference key="20">
    <citation type="journal article" date="2004" name="Proteomics">
        <title>Screening for N-glycosylated proteins by liquid chromatography mass spectrometry.</title>
        <authorList>
            <person name="Bunkenborg J."/>
            <person name="Pilch B.J."/>
            <person name="Podtelejnikov A.V."/>
            <person name="Wisniewski J.R."/>
        </authorList>
    </citation>
    <scope>GLYCOSYLATION [LARGE SCALE ANALYSIS] AT ASN-93</scope>
    <source>
        <tissue>Plasma</tissue>
    </source>
</reference>
<reference key="21">
    <citation type="journal article" date="2005" name="J. Proteome Res.">
        <title>Human plasma N-glycoproteome analysis by immunoaffinity subtraction, hydrazide chemistry, and mass spectrometry.</title>
        <authorList>
            <person name="Liu T."/>
            <person name="Qian W.-J."/>
            <person name="Gritsenko M.A."/>
            <person name="Camp D.G. II"/>
            <person name="Monroe M.E."/>
            <person name="Moore R.J."/>
            <person name="Smith R.D."/>
        </authorList>
    </citation>
    <scope>GLYCOSYLATION [LARGE SCALE ANALYSIS] AT ASN-33; ASN-93; ASN-106; ASN-127; ASN-186 AND ASN-271</scope>
    <source>
        <tissue>Plasma</tissue>
    </source>
</reference>
<reference key="22">
    <citation type="journal article" date="2009" name="J. Proteome Res.">
        <title>Glycoproteomics analysis of human liver tissue by combination of multiple enzyme digestion and hydrazide chemistry.</title>
        <authorList>
            <person name="Chen R."/>
            <person name="Jiang X."/>
            <person name="Sun D."/>
            <person name="Han G."/>
            <person name="Wang F."/>
            <person name="Ye M."/>
            <person name="Wang L."/>
            <person name="Zou H."/>
        </authorList>
    </citation>
    <scope>GLYCOSYLATION [LARGE SCALE ANALYSIS] AT ASN-93; ASN-106; ASN-127 AND ASN-271</scope>
    <source>
        <tissue>Liver</tissue>
    </source>
</reference>
<reference key="23">
    <citation type="journal article" date="2013" name="J. Proteome Res.">
        <title>LC-MS/MS characterization of O-glycosylation sites and glycan structures of human cerebrospinal fluid glycoproteins.</title>
        <authorList>
            <person name="Halim A."/>
            <person name="Ruetschi U."/>
            <person name="Larson G."/>
            <person name="Nilsson J."/>
        </authorList>
    </citation>
    <scope>GLYCOSYLATION</scope>
    <scope>IDENTIFICATION BY MASS SPECTROMETRY</scope>
</reference>
<reference key="24">
    <citation type="journal article" date="1991" name="J. Mol. Biol.">
        <title>Crystal structure of cleaved human alpha 1-antichymotrypsin at 2.7-A resolution and its comparison with other serpins.</title>
        <authorList>
            <person name="Baumann U."/>
            <person name="Huber R."/>
            <person name="Bode W."/>
            <person name="Grosse D."/>
            <person name="Lesjak M."/>
            <person name="Laurell C.-B."/>
        </authorList>
    </citation>
    <scope>X-RAY CRYSTALLOGRAPHY (2.7 ANGSTROMS) OF 24-423</scope>
</reference>
<reference key="25">
    <citation type="journal article" date="1996" name="Nat. Struct. Biol.">
        <title>Arginine substitutions in the hinge region of antichymotrypsin affect serpin beta-sheet rearrangement.</title>
        <authorList>
            <person name="Lukacs C.M."/>
            <person name="Zhong J.Q."/>
            <person name="Plotnick M.I."/>
            <person name="Rubin H."/>
            <person name="Cooperman B.S."/>
            <person name="Christianson D.W."/>
        </authorList>
    </citation>
    <scope>X-RAY CRYSTALLOGRAPHY (2.95 ANGSTROMS) OF 43-423 OF MUTANTS ARG-370 AND ARG-372</scope>
</reference>
<reference key="26">
    <citation type="journal article" date="1998" name="Biochemistry">
        <title>Engineering an anion-binding cavity in antichymotrypsin modulates the 'spring-loaded' serpin-protease interaction.</title>
        <authorList>
            <person name="Lukacs C.M."/>
            <person name="Rubin H."/>
            <person name="Christianson D.W."/>
        </authorList>
    </citation>
    <scope>X-RAY CRYSTALLOGRAPHY (2.1 ANGSTROMS) OF 43-423 OF MUTANTS ARG-370; ARG-372 AND ARG-374</scope>
</reference>
<reference key="27">
    <citation type="journal article" date="2000" name="Proc. Natl. Acad. Sci. U.S.A.">
        <title>Inactive conformation of the serpin alpha(1)-antichymotrypsin indicates two-stage insertion of the reactive loop: implications for inhibitory function and conformational disease.</title>
        <authorList>
            <person name="Gooptu B."/>
            <person name="Hazes B."/>
            <person name="Chang W.-S.W."/>
            <person name="Dafforn T.R."/>
            <person name="Carrell R.W."/>
            <person name="Read R.J."/>
            <person name="Lomas D.A."/>
        </authorList>
    </citation>
    <scope>X-RAY CRYSTALLOGRAPHY (2.27 ANGSTROMS) OF 26-423</scope>
</reference>
<reference key="28">
    <citation type="journal article" date="1992" name="FEBS Lett.">
        <title>Detection of a new mutant alpha-1-antichymotrypsin in patients with occlusive-cerebrovascular disease.</title>
        <authorList>
            <person name="Tsuda M."/>
            <person name="Sei Y."/>
            <person name="Yamamura M."/>
            <person name="Yamamoto M."/>
            <person name="Shinohara Y."/>
        </authorList>
    </citation>
    <scope>VARIANT VAL-401</scope>
</reference>
<reference key="29">
    <citation type="journal article" date="1992" name="Lancet">
        <title>Mis-sense mutation of alpha 1-antichymotrypsin gene associated with chronic lung disease.</title>
        <authorList>
            <person name="Poller W."/>
            <person name="Faber J.-P."/>
            <person name="Scholz S."/>
            <person name="Weindinger S."/>
            <person name="Bartholome K."/>
            <person name="Olek K."/>
            <person name="Eriksson S."/>
        </authorList>
    </citation>
    <scope>VARIANT ALA-252</scope>
</reference>
<reference key="30">
    <citation type="journal article" date="2001" name="J. Hum. Genet.">
        <title>Alpha-1-antichymotrypsin gene A1252G variant (ACT Isehara-1) is associated with a lacunar type of ischemic cerebrovascular disease.</title>
        <authorList>
            <person name="Tachikawa H."/>
            <person name="Tsuda M."/>
            <person name="Onoe K."/>
            <person name="Ueno M."/>
            <person name="Takagi S."/>
            <person name="Shinohara Y."/>
        </authorList>
    </citation>
    <scope>VARIANT VAL-401</scope>
</reference>
<protein>
    <recommendedName>
        <fullName>Alpha-1-antichymotrypsin</fullName>
        <shortName>ACT</shortName>
    </recommendedName>
    <alternativeName>
        <fullName>Cell growth-inhibiting gene 24/25 protein</fullName>
    </alternativeName>
    <alternativeName>
        <fullName>Serpin A3</fullName>
    </alternativeName>
    <component>
        <recommendedName>
            <fullName>Alpha-1-antichymotrypsin His-Pro-less</fullName>
        </recommendedName>
    </component>
</protein>
<proteinExistence type="evidence at protein level"/>
<organism>
    <name type="scientific">Homo sapiens</name>
    <name type="common">Human</name>
    <dbReference type="NCBI Taxonomy" id="9606"/>
    <lineage>
        <taxon>Eukaryota</taxon>
        <taxon>Metazoa</taxon>
        <taxon>Chordata</taxon>
        <taxon>Craniata</taxon>
        <taxon>Vertebrata</taxon>
        <taxon>Euteleostomi</taxon>
        <taxon>Mammalia</taxon>
        <taxon>Eutheria</taxon>
        <taxon>Euarchontoglires</taxon>
        <taxon>Primates</taxon>
        <taxon>Haplorrhini</taxon>
        <taxon>Catarrhini</taxon>
        <taxon>Hominidae</taxon>
        <taxon>Homo</taxon>
    </lineage>
</organism>
<accession>P01011</accession>
<accession>B3KVQ7</accession>
<accession>Q13703</accession>
<accession>Q2TU87</accession>
<accession>Q2TU88</accession>
<accession>Q59GP9</accession>
<accession>Q6LBY8</accession>
<accession>Q6LDT7</accession>
<accession>Q6NSC9</accession>
<accession>Q8N177</accession>
<accession>Q96DW8</accession>
<accession>Q9UC47</accession>
<accession>Q9UNU9</accession>
<feature type="signal peptide" evidence="13">
    <location>
        <begin position="1"/>
        <end position="23"/>
    </location>
</feature>
<feature type="chain" id="PRO_0000032411" description="Alpha-1-antichymotrypsin">
    <location>
        <begin position="24"/>
        <end position="423"/>
    </location>
</feature>
<feature type="chain" id="PRO_0000032412" description="Alpha-1-antichymotrypsin His-Pro-less">
    <location>
        <begin position="26"/>
        <end position="423"/>
    </location>
</feature>
<feature type="DNA-binding region">
    <location>
        <begin position="235"/>
        <end position="237"/>
    </location>
</feature>
<feature type="region of interest" description="RCL">
    <location>
        <begin position="369"/>
        <end position="394"/>
    </location>
</feature>
<feature type="region of interest" description="O-glycosylated at one site">
    <location>
        <begin position="381"/>
        <end position="389"/>
    </location>
</feature>
<feature type="site" description="Reactive bond">
    <location>
        <begin position="383"/>
        <end position="384"/>
    </location>
</feature>
<feature type="glycosylation site" description="N-linked (GlcNAc...) asparagine" evidence="9">
    <location>
        <position position="33"/>
    </location>
</feature>
<feature type="glycosylation site" description="N-linked (GlcNAc...) asparagine" evidence="2 6 9 10">
    <location>
        <position position="93"/>
    </location>
</feature>
<feature type="glycosylation site" description="N-linked (GlcNAc...) asparagine" evidence="2 9 10">
    <location>
        <position position="106"/>
    </location>
</feature>
<feature type="glycosylation site" description="N-linked (GlcNAc...) asparagine" evidence="9 10">
    <location>
        <position position="127"/>
    </location>
</feature>
<feature type="glycosylation site" description="N-linked (GlcNAc...) asparagine" evidence="9">
    <location>
        <position position="186"/>
    </location>
</feature>
<feature type="glycosylation site" description="N-linked (GlcNAc...) asparagine" evidence="9 10">
    <location>
        <position position="271"/>
    </location>
</feature>
<feature type="splice variant" id="VSP_014225" description="In isoform 3." evidence="19">
    <original>LVLKAPDKNVIFSPLSISTALAFLSLGAHNTT</original>
    <variation>SPRWSIRLCLMYLRRAQKHLLPQQSKSPSFLH</variation>
    <location>
        <begin position="64"/>
        <end position="95"/>
    </location>
</feature>
<feature type="splice variant" id="VSP_014226" description="In isoform 3." evidence="19">
    <location>
        <begin position="96"/>
        <end position="423"/>
    </location>
</feature>
<feature type="splice variant" id="VSP_014227" description="In isoform 2." evidence="20">
    <original>AK</original>
    <variation>ER</variation>
    <location>
        <begin position="215"/>
        <end position="216"/>
    </location>
</feature>
<feature type="splice variant" id="VSP_014228" description="In isoform 2." evidence="20">
    <location>
        <begin position="217"/>
        <end position="423"/>
    </location>
</feature>
<feature type="sequence variant" id="VAR_006973" description="In dbSNP:rs4934." evidence="5 7 17 18">
    <original>A</original>
    <variation>T</variation>
    <location>
        <position position="9"/>
    </location>
</feature>
<feature type="sequence variant" id="VAR_006974" description="In Bochum-1; dbSNP:rs1800463." evidence="15">
    <original>L</original>
    <variation>P</variation>
    <location>
        <position position="78"/>
    </location>
</feature>
<feature type="sequence variant" id="VAR_006975">
    <original>A</original>
    <variation>G</variation>
    <location>
        <position position="167"/>
    </location>
</feature>
<feature type="sequence variant" id="VAR_006976" description="In Bonn-1; dbSNP:rs17473." evidence="3 15">
    <original>P</original>
    <variation>A</variation>
    <location>
        <position position="252"/>
    </location>
</feature>
<feature type="sequence variant" id="VAR_037902" description="In dbSNP:rs17853314." evidence="7">
    <original>K</original>
    <variation>R</variation>
    <location>
        <position position="267"/>
    </location>
</feature>
<feature type="sequence variant" id="VAR_006977" description="Found in patients with occlusive-cerebrovascular disease; uncertain significance; Isehara-1; dbSNP:rs755521612." evidence="1 8">
    <original>M</original>
    <variation>V</variation>
    <location>
        <position position="401"/>
    </location>
</feature>
<feature type="sequence variant" id="VAR_011742" description="In dbSNP:rs10956.">
    <original>D</original>
    <variation>G</variation>
    <location>
        <position position="407"/>
    </location>
</feature>
<feature type="sequence conflict" description="In Ref. 12; AA sequence." evidence="21" ref="12">
    <original>D</original>
    <variation>S</variation>
    <location>
        <position position="55"/>
    </location>
</feature>
<feature type="sequence conflict" description="In Ref. 1; AAA51543." evidence="21" ref="1">
    <original>P</original>
    <variation>L</variation>
    <location>
        <position position="69"/>
    </location>
</feature>
<feature type="sequence conflict" description="In Ref. 5; BAD92297." evidence="21" ref="5">
    <original>K</original>
    <variation>R</variation>
    <location>
        <position position="101"/>
    </location>
</feature>
<feature type="sequence conflict" description="In Ref. 3; AAT08028." evidence="21" ref="3">
    <original>N</original>
    <variation>Y</variation>
    <location>
        <position position="106"/>
    </location>
</feature>
<feature type="sequence conflict" description="In Ref. 3; AAT08029." evidence="21" ref="3">
    <original>D</original>
    <variation>N</variation>
    <location>
        <position position="198"/>
    </location>
</feature>
<feature type="sequence conflict" description="In Ref. 1; AAA51543." evidence="21" ref="1">
    <original>L</original>
    <variation>P</variation>
    <location>
        <position position="199"/>
    </location>
</feature>
<feature type="sequence conflict" description="In Ref. 3; AAT08029." evidence="21" ref="3">
    <original>S</original>
    <variation>N</variation>
    <location>
        <position position="234"/>
    </location>
</feature>
<feature type="sequence conflict" description="In Ref. 3; AAT08028." evidence="21" ref="3">
    <original>S</original>
    <variation>G</variation>
    <location>
        <position position="339"/>
    </location>
</feature>
<feature type="sequence conflict" description="In Ref. 3; AAT08028." evidence="21" ref="3">
    <original>I</original>
    <variation>S</variation>
    <location>
        <position position="346"/>
    </location>
</feature>
<feature type="sequence conflict" description="In Ref. 1; AAA51543." evidence="21" ref="1">
    <original>AVL</original>
    <variation>VVS</variation>
    <location>
        <begin position="361"/>
        <end position="363"/>
    </location>
</feature>
<feature type="helix" evidence="22">
    <location>
        <begin position="49"/>
        <end position="67"/>
    </location>
</feature>
<feature type="strand" evidence="23">
    <location>
        <begin position="69"/>
        <end position="71"/>
    </location>
</feature>
<feature type="strand" evidence="22">
    <location>
        <begin position="73"/>
        <end position="75"/>
    </location>
</feature>
<feature type="helix" evidence="22">
    <location>
        <begin position="77"/>
        <end position="88"/>
    </location>
</feature>
<feature type="helix" evidence="22">
    <location>
        <begin position="93"/>
        <end position="102"/>
    </location>
</feature>
<feature type="turn" evidence="22">
    <location>
        <begin position="107"/>
        <end position="109"/>
    </location>
</feature>
<feature type="helix" evidence="22">
    <location>
        <begin position="112"/>
        <end position="126"/>
    </location>
</feature>
<feature type="strand" evidence="23">
    <location>
        <begin position="130"/>
        <end position="132"/>
    </location>
</feature>
<feature type="strand" evidence="22">
    <location>
        <begin position="134"/>
        <end position="144"/>
    </location>
</feature>
<feature type="helix" evidence="22">
    <location>
        <begin position="151"/>
        <end position="161"/>
    </location>
</feature>
<feature type="strand" evidence="22">
    <location>
        <begin position="164"/>
        <end position="168"/>
    </location>
</feature>
<feature type="helix" evidence="23">
    <location>
        <begin position="170"/>
        <end position="172"/>
    </location>
</feature>
<feature type="helix" evidence="22">
    <location>
        <begin position="173"/>
        <end position="187"/>
    </location>
</feature>
<feature type="turn" evidence="22">
    <location>
        <begin position="188"/>
        <end position="190"/>
    </location>
</feature>
<feature type="strand" evidence="22">
    <location>
        <begin position="203"/>
        <end position="219"/>
    </location>
</feature>
<feature type="helix" evidence="22">
    <location>
        <begin position="223"/>
        <end position="225"/>
    </location>
</feature>
<feature type="strand" evidence="22">
    <location>
        <begin position="227"/>
        <end position="234"/>
    </location>
</feature>
<feature type="strand" evidence="22">
    <location>
        <begin position="237"/>
        <end position="256"/>
    </location>
</feature>
<feature type="turn" evidence="22">
    <location>
        <begin position="257"/>
        <end position="260"/>
    </location>
</feature>
<feature type="strand" evidence="22">
    <location>
        <begin position="261"/>
        <end position="279"/>
    </location>
</feature>
<feature type="turn" evidence="24">
    <location>
        <begin position="281"/>
        <end position="283"/>
    </location>
</feature>
<feature type="helix" evidence="22">
    <location>
        <begin position="284"/>
        <end position="289"/>
    </location>
</feature>
<feature type="helix" evidence="22">
    <location>
        <begin position="293"/>
        <end position="302"/>
    </location>
</feature>
<feature type="strand" evidence="22">
    <location>
        <begin position="304"/>
        <end position="314"/>
    </location>
</feature>
<feature type="strand" evidence="22">
    <location>
        <begin position="316"/>
        <end position="323"/>
    </location>
</feature>
<feature type="helix" evidence="22">
    <location>
        <begin position="325"/>
        <end position="330"/>
    </location>
</feature>
<feature type="helix" evidence="22">
    <location>
        <begin position="335"/>
        <end position="337"/>
    </location>
</feature>
<feature type="helix" evidence="22">
    <location>
        <begin position="344"/>
        <end position="347"/>
    </location>
</feature>
<feature type="strand" evidence="22">
    <location>
        <begin position="348"/>
        <end position="350"/>
    </location>
</feature>
<feature type="strand" evidence="22">
    <location>
        <begin position="352"/>
        <end position="365"/>
    </location>
</feature>
<feature type="strand" evidence="22">
    <location>
        <begin position="367"/>
        <end position="382"/>
    </location>
</feature>
<feature type="strand" evidence="22">
    <location>
        <begin position="391"/>
        <end position="394"/>
    </location>
</feature>
<feature type="strand" evidence="22">
    <location>
        <begin position="399"/>
        <end position="405"/>
    </location>
</feature>
<feature type="turn" evidence="25">
    <location>
        <begin position="406"/>
        <end position="408"/>
    </location>
</feature>
<feature type="strand" evidence="22">
    <location>
        <begin position="412"/>
        <end position="418"/>
    </location>
</feature>
<dbReference type="EMBL" id="K01500">
    <property type="protein sequence ID" value="AAA51543.1"/>
    <property type="status" value="ALT_FRAME"/>
    <property type="molecule type" value="mRNA"/>
</dbReference>
<dbReference type="EMBL" id="X68733">
    <property type="protein sequence ID" value="CAA48671.1"/>
    <property type="status" value="ALT_INIT"/>
    <property type="molecule type" value="Genomic_DNA"/>
</dbReference>
<dbReference type="EMBL" id="X68734">
    <property type="protein sequence ID" value="CAA48671.1"/>
    <property type="status" value="JOINED"/>
    <property type="molecule type" value="Genomic_DNA"/>
</dbReference>
<dbReference type="EMBL" id="X68735">
    <property type="protein sequence ID" value="CAA48671.1"/>
    <property type="status" value="JOINED"/>
    <property type="molecule type" value="Genomic_DNA"/>
</dbReference>
<dbReference type="EMBL" id="X68736">
    <property type="protein sequence ID" value="CAA48671.1"/>
    <property type="status" value="JOINED"/>
    <property type="molecule type" value="Genomic_DNA"/>
</dbReference>
<dbReference type="EMBL" id="X68737">
    <property type="protein sequence ID" value="CAA48671.1"/>
    <property type="status" value="JOINED"/>
    <property type="molecule type" value="Genomic_DNA"/>
</dbReference>
<dbReference type="EMBL" id="AY513275">
    <property type="protein sequence ID" value="AAT08028.1"/>
    <property type="molecule type" value="mRNA"/>
</dbReference>
<dbReference type="EMBL" id="AY513276">
    <property type="protein sequence ID" value="AAT08029.1"/>
    <property type="status" value="ALT_SEQ"/>
    <property type="molecule type" value="mRNA"/>
</dbReference>
<dbReference type="EMBL" id="AK123091">
    <property type="protein sequence ID" value="BAG53869.1"/>
    <property type="molecule type" value="mRNA"/>
</dbReference>
<dbReference type="EMBL" id="AB209060">
    <property type="protein sequence ID" value="BAD92297.1"/>
    <property type="status" value="ALT_INIT"/>
    <property type="molecule type" value="mRNA"/>
</dbReference>
<dbReference type="EMBL" id="BC003559">
    <property type="protein sequence ID" value="AAH03559.3"/>
    <property type="molecule type" value="mRNA"/>
</dbReference>
<dbReference type="EMBL" id="BC010530">
    <property type="protein sequence ID" value="AAH10530.1"/>
    <property type="molecule type" value="mRNA"/>
</dbReference>
<dbReference type="EMBL" id="BC013189">
    <property type="protein sequence ID" value="AAH13189.1"/>
    <property type="molecule type" value="mRNA"/>
</dbReference>
<dbReference type="EMBL" id="BC034554">
    <property type="protein sequence ID" value="AAH34554.1"/>
    <property type="molecule type" value="mRNA"/>
</dbReference>
<dbReference type="EMBL" id="BC070265">
    <property type="protein sequence ID" value="AAH70265.1"/>
    <property type="molecule type" value="mRNA"/>
</dbReference>
<dbReference type="EMBL" id="M18906">
    <property type="protein sequence ID" value="AAA51559.1"/>
    <property type="molecule type" value="mRNA"/>
</dbReference>
<dbReference type="EMBL" id="AF089747">
    <property type="protein sequence ID" value="AAD08810.1"/>
    <property type="molecule type" value="mRNA"/>
</dbReference>
<dbReference type="EMBL" id="J05176">
    <property type="protein sequence ID" value="AAA51560.1"/>
    <property type="molecule type" value="mRNA"/>
</dbReference>
<dbReference type="EMBL" id="X00947">
    <property type="protein sequence ID" value="CAA25459.1"/>
    <property type="molecule type" value="Genomic_DNA"/>
</dbReference>
<dbReference type="CCDS" id="CCDS32150.1">
    <molecule id="P01011-1"/>
</dbReference>
<dbReference type="PIR" id="A90475">
    <property type="entry name" value="ITHUC"/>
</dbReference>
<dbReference type="PIR" id="S62374">
    <property type="entry name" value="S62374"/>
</dbReference>
<dbReference type="RefSeq" id="NP_001076.2">
    <molecule id="P01011-1"/>
    <property type="nucleotide sequence ID" value="NM_001085.5"/>
</dbReference>
<dbReference type="RefSeq" id="NP_001371601.1">
    <molecule id="P01011-1"/>
    <property type="nucleotide sequence ID" value="NM_001384672.1"/>
</dbReference>
<dbReference type="RefSeq" id="NP_001371602.1">
    <molecule id="P01011-1"/>
    <property type="nucleotide sequence ID" value="NM_001384673.1"/>
</dbReference>
<dbReference type="RefSeq" id="NP_001371603.1">
    <molecule id="P01011-1"/>
    <property type="nucleotide sequence ID" value="NM_001384674.1"/>
</dbReference>
<dbReference type="PDB" id="1AS4">
    <property type="method" value="X-ray"/>
    <property type="resolution" value="2.10 A"/>
    <property type="chains" value="A=43-383, B=387-423"/>
</dbReference>
<dbReference type="PDB" id="1QMN">
    <property type="method" value="X-ray"/>
    <property type="resolution" value="2.27 A"/>
    <property type="chains" value="A=26-423"/>
</dbReference>
<dbReference type="PDB" id="2ACH">
    <property type="method" value="X-ray"/>
    <property type="resolution" value="2.70 A"/>
    <property type="chains" value="A=24-383, B=384-423"/>
</dbReference>
<dbReference type="PDB" id="3CAA">
    <property type="method" value="X-ray"/>
    <property type="resolution" value="2.40 A"/>
    <property type="chains" value="A=43-383, B=387-423"/>
</dbReference>
<dbReference type="PDB" id="3DLW">
    <property type="method" value="X-ray"/>
    <property type="resolution" value="2.70 A"/>
    <property type="chains" value="A=25-423"/>
</dbReference>
<dbReference type="PDB" id="4CAA">
    <property type="method" value="X-ray"/>
    <property type="resolution" value="2.90 A"/>
    <property type="chains" value="A=43-383, B=387-423"/>
</dbReference>
<dbReference type="PDB" id="6HGE">
    <property type="method" value="X-ray"/>
    <property type="resolution" value="2.80 A"/>
    <property type="chains" value="A/B/C/D=26-423"/>
</dbReference>
<dbReference type="PDB" id="9C2T">
    <property type="method" value="EM"/>
    <property type="resolution" value="3.10 A"/>
    <property type="chains" value="S=48-422"/>
</dbReference>
<dbReference type="PDB" id="9D7K">
    <property type="method" value="EM"/>
    <property type="resolution" value="3.00 A"/>
    <property type="chains" value="S=1-423"/>
</dbReference>
<dbReference type="PDBsum" id="1AS4"/>
<dbReference type="PDBsum" id="1QMN"/>
<dbReference type="PDBsum" id="2ACH"/>
<dbReference type="PDBsum" id="3CAA"/>
<dbReference type="PDBsum" id="3DLW"/>
<dbReference type="PDBsum" id="4CAA"/>
<dbReference type="PDBsum" id="6HGE"/>
<dbReference type="PDBsum" id="9C2T"/>
<dbReference type="PDBsum" id="9D7K"/>
<dbReference type="EMDB" id="EMD-45160"/>
<dbReference type="EMDB" id="EMD-46607"/>
<dbReference type="SMR" id="P01011"/>
<dbReference type="BioGRID" id="106530">
    <property type="interactions" value="156"/>
</dbReference>
<dbReference type="CORUM" id="P01011"/>
<dbReference type="FunCoup" id="P01011">
    <property type="interactions" value="95"/>
</dbReference>
<dbReference type="IntAct" id="P01011">
    <property type="interactions" value="94"/>
</dbReference>
<dbReference type="MINT" id="P01011"/>
<dbReference type="STRING" id="9606.ENSP00000450540"/>
<dbReference type="BindingDB" id="P01011"/>
<dbReference type="ChEMBL" id="CHEMBL5960"/>
<dbReference type="DrugBank" id="DB17449">
    <property type="generic name" value="Anacaulase"/>
</dbReference>
<dbReference type="DrugBank" id="DB01593">
    <property type="generic name" value="Zinc"/>
</dbReference>
<dbReference type="DrugBank" id="DB14487">
    <property type="generic name" value="Zinc acetate"/>
</dbReference>
<dbReference type="DrugBank" id="DB14533">
    <property type="generic name" value="Zinc chloride"/>
</dbReference>
<dbReference type="DrugBank" id="DB14548">
    <property type="generic name" value="Zinc sulfate, unspecified form"/>
</dbReference>
<dbReference type="MEROPS" id="I04.002"/>
<dbReference type="CarbonylDB" id="P01011"/>
<dbReference type="GlyConnect" id="19">
    <property type="glycosylation" value="77 N-Linked glycans (5 sites)"/>
</dbReference>
<dbReference type="GlyCosmos" id="P01011">
    <property type="glycosylation" value="8 sites, 79 glycans"/>
</dbReference>
<dbReference type="GlyGen" id="P01011">
    <property type="glycosylation" value="12 sites, 188 N-linked glycans (6 sites), 4 O-linked glycans (5 sites)"/>
</dbReference>
<dbReference type="iPTMnet" id="P01011"/>
<dbReference type="PhosphoSitePlus" id="P01011"/>
<dbReference type="BioMuta" id="SERPINA3"/>
<dbReference type="DMDM" id="112874"/>
<dbReference type="CPTAC" id="non-CPTAC-1061"/>
<dbReference type="CPTAC" id="non-CPTAC-1062"/>
<dbReference type="jPOST" id="P01011"/>
<dbReference type="MassIVE" id="P01011"/>
<dbReference type="PaxDb" id="9606-ENSP00000376793"/>
<dbReference type="PeptideAtlas" id="P01011"/>
<dbReference type="PRIDE" id="P01011"/>
<dbReference type="ProteomicsDB" id="51303">
    <molecule id="P01011-1"/>
</dbReference>
<dbReference type="ProteomicsDB" id="51304">
    <molecule id="P01011-2"/>
</dbReference>
<dbReference type="ProteomicsDB" id="51305">
    <molecule id="P01011-3"/>
</dbReference>
<dbReference type="Antibodypedia" id="765">
    <property type="antibodies" value="662 antibodies from 40 providers"/>
</dbReference>
<dbReference type="DNASU" id="12"/>
<dbReference type="Ensembl" id="ENST00000393078.5">
    <molecule id="P01011-1"/>
    <property type="protein sequence ID" value="ENSP00000376793.3"/>
    <property type="gene ID" value="ENSG00000196136.18"/>
</dbReference>
<dbReference type="Ensembl" id="ENST00000393080.8">
    <molecule id="P01011-1"/>
    <property type="protein sequence ID" value="ENSP00000376795.4"/>
    <property type="gene ID" value="ENSG00000196136.18"/>
</dbReference>
<dbReference type="Ensembl" id="ENST00000467132.5">
    <molecule id="P01011-1"/>
    <property type="protein sequence ID" value="ENSP00000450540.1"/>
    <property type="gene ID" value="ENSG00000196136.18"/>
</dbReference>
<dbReference type="Ensembl" id="ENST00000556968.2">
    <molecule id="P01011-2"/>
    <property type="protein sequence ID" value="ENSP00000452476.1"/>
    <property type="gene ID" value="ENSG00000196136.18"/>
</dbReference>
<dbReference type="GeneID" id="12"/>
<dbReference type="KEGG" id="hsa:12"/>
<dbReference type="MANE-Select" id="ENST00000393078.5">
    <property type="protein sequence ID" value="ENSP00000376793.3"/>
    <property type="RefSeq nucleotide sequence ID" value="NM_001085.5"/>
    <property type="RefSeq protein sequence ID" value="NP_001076.2"/>
</dbReference>
<dbReference type="UCSC" id="uc001ydp.4">
    <molecule id="P01011-1"/>
    <property type="organism name" value="human"/>
</dbReference>
<dbReference type="AGR" id="HGNC:16"/>
<dbReference type="CTD" id="12"/>
<dbReference type="DisGeNET" id="12"/>
<dbReference type="GeneCards" id="SERPINA3"/>
<dbReference type="HGNC" id="HGNC:16">
    <property type="gene designation" value="SERPINA3"/>
</dbReference>
<dbReference type="HPA" id="ENSG00000196136">
    <property type="expression patterns" value="Group enriched (liver, pancreas)"/>
</dbReference>
<dbReference type="MIM" id="107280">
    <property type="type" value="gene"/>
</dbReference>
<dbReference type="neXtProt" id="NX_P01011"/>
<dbReference type="OpenTargets" id="ENSG00000196136"/>
<dbReference type="PharmGKB" id="PA35020"/>
<dbReference type="VEuPathDB" id="HostDB:ENSG00000196136"/>
<dbReference type="eggNOG" id="KOG2392">
    <property type="taxonomic scope" value="Eukaryota"/>
</dbReference>
<dbReference type="GeneTree" id="ENSGT00940000154392"/>
<dbReference type="HOGENOM" id="CLU_023330_2_1_1"/>
<dbReference type="InParanoid" id="P01011"/>
<dbReference type="OMA" id="RHIDELY"/>
<dbReference type="OrthoDB" id="671595at2759"/>
<dbReference type="PAN-GO" id="P01011">
    <property type="GO annotations" value="3 GO annotations based on evolutionary models"/>
</dbReference>
<dbReference type="PhylomeDB" id="P01011"/>
<dbReference type="TreeFam" id="TF343201"/>
<dbReference type="PathwayCommons" id="P01011"/>
<dbReference type="Reactome" id="R-HSA-114608">
    <property type="pathway name" value="Platelet degranulation"/>
</dbReference>
<dbReference type="Reactome" id="R-HSA-6798695">
    <property type="pathway name" value="Neutrophil degranulation"/>
</dbReference>
<dbReference type="SignaLink" id="P01011"/>
<dbReference type="SIGNOR" id="P01011"/>
<dbReference type="BioGRID-ORCS" id="12">
    <property type="hits" value="11 hits in 1160 CRISPR screens"/>
</dbReference>
<dbReference type="ChiTaRS" id="SERPINA3">
    <property type="organism name" value="human"/>
</dbReference>
<dbReference type="EvolutionaryTrace" id="P01011"/>
<dbReference type="GeneWiki" id="Alpha_1-antichymotrypsin"/>
<dbReference type="GenomeRNAi" id="12"/>
<dbReference type="Pharos" id="P01011">
    <property type="development level" value="Tbio"/>
</dbReference>
<dbReference type="PRO" id="PR:P01011"/>
<dbReference type="Proteomes" id="UP000005640">
    <property type="component" value="Chromosome 14"/>
</dbReference>
<dbReference type="RNAct" id="P01011">
    <property type="molecule type" value="protein"/>
</dbReference>
<dbReference type="Bgee" id="ENSG00000196136">
    <property type="expression patterns" value="Expressed in right lobe of liver and 95 other cell types or tissues"/>
</dbReference>
<dbReference type="ExpressionAtlas" id="P01011">
    <property type="expression patterns" value="baseline and differential"/>
</dbReference>
<dbReference type="GO" id="GO:0035578">
    <property type="term" value="C:azurophil granule lumen"/>
    <property type="evidence" value="ECO:0000304"/>
    <property type="project" value="Reactome"/>
</dbReference>
<dbReference type="GO" id="GO:0072562">
    <property type="term" value="C:blood microparticle"/>
    <property type="evidence" value="ECO:0007005"/>
    <property type="project" value="UniProtKB"/>
</dbReference>
<dbReference type="GO" id="GO:0062023">
    <property type="term" value="C:collagen-containing extracellular matrix"/>
    <property type="evidence" value="ECO:0007005"/>
    <property type="project" value="BHF-UCL"/>
</dbReference>
<dbReference type="GO" id="GO:0070062">
    <property type="term" value="C:extracellular exosome"/>
    <property type="evidence" value="ECO:0007005"/>
    <property type="project" value="UniProtKB"/>
</dbReference>
<dbReference type="GO" id="GO:0005576">
    <property type="term" value="C:extracellular region"/>
    <property type="evidence" value="ECO:0000304"/>
    <property type="project" value="Reactome"/>
</dbReference>
<dbReference type="GO" id="GO:0005615">
    <property type="term" value="C:extracellular space"/>
    <property type="evidence" value="ECO:0000314"/>
    <property type="project" value="UniProtKB"/>
</dbReference>
<dbReference type="GO" id="GO:0005634">
    <property type="term" value="C:nucleus"/>
    <property type="evidence" value="ECO:0000304"/>
    <property type="project" value="UniProtKB"/>
</dbReference>
<dbReference type="GO" id="GO:0031093">
    <property type="term" value="C:platelet alpha granule lumen"/>
    <property type="evidence" value="ECO:0000304"/>
    <property type="project" value="Reactome"/>
</dbReference>
<dbReference type="GO" id="GO:0034774">
    <property type="term" value="C:secretory granule lumen"/>
    <property type="evidence" value="ECO:0000304"/>
    <property type="project" value="Reactome"/>
</dbReference>
<dbReference type="GO" id="GO:0003677">
    <property type="term" value="F:DNA binding"/>
    <property type="evidence" value="ECO:0000304"/>
    <property type="project" value="UniProtKB"/>
</dbReference>
<dbReference type="GO" id="GO:0004867">
    <property type="term" value="F:serine-type endopeptidase inhibitor activity"/>
    <property type="evidence" value="ECO:0000318"/>
    <property type="project" value="GO_Central"/>
</dbReference>
<dbReference type="GO" id="GO:0006953">
    <property type="term" value="P:acute-phase response"/>
    <property type="evidence" value="ECO:0007669"/>
    <property type="project" value="UniProtKB-KW"/>
</dbReference>
<dbReference type="GO" id="GO:0006954">
    <property type="term" value="P:inflammatory response"/>
    <property type="evidence" value="ECO:0000303"/>
    <property type="project" value="UniProtKB"/>
</dbReference>
<dbReference type="GO" id="GO:0030277">
    <property type="term" value="P:maintenance of gastrointestinal epithelium"/>
    <property type="evidence" value="ECO:0000303"/>
    <property type="project" value="UniProtKB"/>
</dbReference>
<dbReference type="GO" id="GO:0019216">
    <property type="term" value="P:regulation of lipid metabolic process"/>
    <property type="evidence" value="ECO:0000303"/>
    <property type="project" value="UniProtKB"/>
</dbReference>
<dbReference type="GO" id="GO:0034097">
    <property type="term" value="P:response to cytokine"/>
    <property type="evidence" value="ECO:0000318"/>
    <property type="project" value="GO_Central"/>
</dbReference>
<dbReference type="CDD" id="cd19551">
    <property type="entry name" value="serpinA3_A1AC"/>
    <property type="match status" value="1"/>
</dbReference>
<dbReference type="FunFam" id="3.30.497.10:FF:000001">
    <property type="entry name" value="Serine protease inhibitor"/>
    <property type="match status" value="1"/>
</dbReference>
<dbReference type="FunFam" id="2.30.39.10:FF:000002">
    <property type="entry name" value="Serpin family D member 1"/>
    <property type="match status" value="1"/>
</dbReference>
<dbReference type="Gene3D" id="2.30.39.10">
    <property type="entry name" value="Alpha-1-antitrypsin, domain 1"/>
    <property type="match status" value="1"/>
</dbReference>
<dbReference type="Gene3D" id="3.30.497.10">
    <property type="entry name" value="Antithrombin, subunit I, domain 2"/>
    <property type="match status" value="1"/>
</dbReference>
<dbReference type="InterPro" id="IPR023795">
    <property type="entry name" value="Serpin_CS"/>
</dbReference>
<dbReference type="InterPro" id="IPR023796">
    <property type="entry name" value="Serpin_dom"/>
</dbReference>
<dbReference type="InterPro" id="IPR000215">
    <property type="entry name" value="Serpin_fam"/>
</dbReference>
<dbReference type="InterPro" id="IPR036186">
    <property type="entry name" value="Serpin_sf"/>
</dbReference>
<dbReference type="InterPro" id="IPR042178">
    <property type="entry name" value="Serpin_sf_1"/>
</dbReference>
<dbReference type="InterPro" id="IPR042185">
    <property type="entry name" value="Serpin_sf_2"/>
</dbReference>
<dbReference type="PANTHER" id="PTHR11461:SF145">
    <property type="entry name" value="ALPHA-1-ANTICHYMOTRYPSIN"/>
    <property type="match status" value="1"/>
</dbReference>
<dbReference type="PANTHER" id="PTHR11461">
    <property type="entry name" value="SERINE PROTEASE INHIBITOR, SERPIN"/>
    <property type="match status" value="1"/>
</dbReference>
<dbReference type="Pfam" id="PF00079">
    <property type="entry name" value="Serpin"/>
    <property type="match status" value="1"/>
</dbReference>
<dbReference type="SMART" id="SM00093">
    <property type="entry name" value="SERPIN"/>
    <property type="match status" value="1"/>
</dbReference>
<dbReference type="SUPFAM" id="SSF56574">
    <property type="entry name" value="Serpins"/>
    <property type="match status" value="1"/>
</dbReference>
<dbReference type="PROSITE" id="PS00284">
    <property type="entry name" value="SERPIN"/>
    <property type="match status" value="1"/>
</dbReference>
<evidence type="ECO:0000269" key="1">
    <source>
    </source>
</evidence>
<evidence type="ECO:0000269" key="2">
    <source>
    </source>
</evidence>
<evidence type="ECO:0000269" key="3">
    <source>
    </source>
</evidence>
<evidence type="ECO:0000269" key="4">
    <source>
    </source>
</evidence>
<evidence type="ECO:0000269" key="5">
    <source>
    </source>
</evidence>
<evidence type="ECO:0000269" key="6">
    <source>
    </source>
</evidence>
<evidence type="ECO:0000269" key="7">
    <source>
    </source>
</evidence>
<evidence type="ECO:0000269" key="8">
    <source>
    </source>
</evidence>
<evidence type="ECO:0000269" key="9">
    <source>
    </source>
</evidence>
<evidence type="ECO:0000269" key="10">
    <source>
    </source>
</evidence>
<evidence type="ECO:0000269" key="11">
    <source>
    </source>
</evidence>
<evidence type="ECO:0000269" key="12">
    <source>
    </source>
</evidence>
<evidence type="ECO:0000269" key="13">
    <source>
    </source>
</evidence>
<evidence type="ECO:0000269" key="14">
    <source>
    </source>
</evidence>
<evidence type="ECO:0000269" key="15">
    <source>
    </source>
</evidence>
<evidence type="ECO:0000269" key="16">
    <source>
    </source>
</evidence>
<evidence type="ECO:0000269" key="17">
    <source ref="3"/>
</evidence>
<evidence type="ECO:0000269" key="18">
    <source ref="5"/>
</evidence>
<evidence type="ECO:0000303" key="19">
    <source>
    </source>
</evidence>
<evidence type="ECO:0000303" key="20">
    <source ref="5"/>
</evidence>
<evidence type="ECO:0000305" key="21"/>
<evidence type="ECO:0007829" key="22">
    <source>
        <dbReference type="PDB" id="1AS4"/>
    </source>
</evidence>
<evidence type="ECO:0007829" key="23">
    <source>
        <dbReference type="PDB" id="1QMN"/>
    </source>
</evidence>
<evidence type="ECO:0007829" key="24">
    <source>
        <dbReference type="PDB" id="2ACH"/>
    </source>
</evidence>
<evidence type="ECO:0007829" key="25">
    <source>
        <dbReference type="PDB" id="6HGE"/>
    </source>
</evidence>
<name>AACT_HUMAN</name>
<gene>
    <name type="primary">SERPINA3</name>
    <name type="synonym">AACT</name>
    <name type="ORF">GIG24</name>
    <name type="ORF">GIG25</name>
</gene>
<sequence>MERMLPLLALGLLAAGFCPAVLCHPNSPLDEENLTQENQDRGTHVDLGLASANVDFAFSLYKQLVLKAPDKNVIFSPLSISTALAFLSLGAHNTTLTEILKGLKFNLTETSEAEIHQSFQHLLRTLNQSSDELQLSMGNAMFVKEQLSLLDRFTEDAKRLYGSEAFATDFQDSAAAKKLINDYVKNGTRGKITDLIKDLDSQTMMVLVNYIFFKAKWEMPFDPQDTHQSRFYLSKKKWVMVPMMSLHHLTIPYFRDEELSCTVVELKYTGNASALFILPDQDKMEEVEAMLLPETLKRWRDSLEFREIGELYLPKFSISRDYNLNDILLQLGIEEAFTSKADLSGITGARNLAVSQVVHKAVLDVFEEGTEASAATAVKITLLSALVETRTIVRFNRPFLMIIVPTDTQNIFFMSKVTNPKQA</sequence>